<organism>
    <name type="scientific">Cupriavidus pinatubonensis (strain JMP 134 / LMG 1197)</name>
    <name type="common">Cupriavidus necator (strain JMP 134)</name>
    <dbReference type="NCBI Taxonomy" id="264198"/>
    <lineage>
        <taxon>Bacteria</taxon>
        <taxon>Pseudomonadati</taxon>
        <taxon>Pseudomonadota</taxon>
        <taxon>Betaproteobacteria</taxon>
        <taxon>Burkholderiales</taxon>
        <taxon>Burkholderiaceae</taxon>
        <taxon>Cupriavidus</taxon>
    </lineage>
</organism>
<keyword id="KW-0963">Cytoplasm</keyword>
<keyword id="KW-0342">GTP-binding</keyword>
<keyword id="KW-0547">Nucleotide-binding</keyword>
<keyword id="KW-0648">Protein biosynthesis</keyword>
<evidence type="ECO:0000255" key="1">
    <source>
        <dbReference type="HAMAP-Rule" id="MF_00072"/>
    </source>
</evidence>
<sequence length="533" mass="59124">MSSLVSEIARRRTFAIISHPDAGKTTLTEKLLWFGGAIQVAGEVRARKADRHATSDWMELEKQRGISVTSSVMQFPYRREAADGKAEENIVNLLDTPGHEDFSEDTYRTLTAVDSAVMVIDSVNGVEAQTIKLLNVCRLRATPILTFINKLDREGRSPIELLDEIEDVLQIQCAPMTWPIGMGKAFRGVYHLIDDKVQLFDPHGDKGTAAILDGLDNPELDRILGSQADELRLEIELVRGASHTFDKEAFLAGKQTPVYFGSAINNFGVQSLLDALCQLSPPPLARNTESRVVEPQEGKFTGFVFKIQANMDPRHRDRIAFVRVCSGRFERGMKLLHVSQAKTVAINNAITFMAQDRNTTEEAYAGDIIGVPNHGTIRLGDVFTEGEPLKFTGIPSFAPEFFRRARLNNPLKVKQLQKGLQQLAEEGATQMFRPLASNELVLGAVGILQFDVVAHRLEHEYGVDAIFESHECATARWLKGAPAEIEKLIAKAGHNVALDGAGDHVYLAPSMVNLRLTQEKFPDVQFLETREIV</sequence>
<feature type="chain" id="PRO_0000242202" description="Peptide chain release factor 3">
    <location>
        <begin position="1"/>
        <end position="533"/>
    </location>
</feature>
<feature type="domain" description="tr-type G">
    <location>
        <begin position="9"/>
        <end position="284"/>
    </location>
</feature>
<feature type="binding site" evidence="1">
    <location>
        <begin position="18"/>
        <end position="25"/>
    </location>
    <ligand>
        <name>GTP</name>
        <dbReference type="ChEBI" id="CHEBI:37565"/>
    </ligand>
</feature>
<feature type="binding site" evidence="1">
    <location>
        <begin position="95"/>
        <end position="99"/>
    </location>
    <ligand>
        <name>GTP</name>
        <dbReference type="ChEBI" id="CHEBI:37565"/>
    </ligand>
</feature>
<feature type="binding site" evidence="1">
    <location>
        <begin position="149"/>
        <end position="152"/>
    </location>
    <ligand>
        <name>GTP</name>
        <dbReference type="ChEBI" id="CHEBI:37565"/>
    </ligand>
</feature>
<proteinExistence type="inferred from homology"/>
<accession>Q46QA5</accession>
<comment type="function">
    <text evidence="1">Increases the formation of ribosomal termination complexes and stimulates activities of RF-1 and RF-2. It binds guanine nucleotides and has strong preference for UGA stop codons. It may interact directly with the ribosome. The stimulation of RF-1 and RF-2 is significantly reduced by GTP and GDP, but not by GMP.</text>
</comment>
<comment type="subcellular location">
    <subcellularLocation>
        <location evidence="1">Cytoplasm</location>
    </subcellularLocation>
</comment>
<comment type="similarity">
    <text evidence="1">Belongs to the TRAFAC class translation factor GTPase superfamily. Classic translation factor GTPase family. PrfC subfamily.</text>
</comment>
<protein>
    <recommendedName>
        <fullName evidence="1">Peptide chain release factor 3</fullName>
        <shortName evidence="1">RF-3</shortName>
    </recommendedName>
</protein>
<dbReference type="EMBL" id="CP000091">
    <property type="protein sequence ID" value="AAZ64679.1"/>
    <property type="molecule type" value="Genomic_DNA"/>
</dbReference>
<dbReference type="SMR" id="Q46QA5"/>
<dbReference type="STRING" id="264198.Reut_B5334"/>
<dbReference type="KEGG" id="reu:Reut_B5334"/>
<dbReference type="eggNOG" id="COG4108">
    <property type="taxonomic scope" value="Bacteria"/>
</dbReference>
<dbReference type="HOGENOM" id="CLU_002794_2_1_4"/>
<dbReference type="OrthoDB" id="9804431at2"/>
<dbReference type="GO" id="GO:0005829">
    <property type="term" value="C:cytosol"/>
    <property type="evidence" value="ECO:0007669"/>
    <property type="project" value="TreeGrafter"/>
</dbReference>
<dbReference type="GO" id="GO:0005525">
    <property type="term" value="F:GTP binding"/>
    <property type="evidence" value="ECO:0007669"/>
    <property type="project" value="UniProtKB-UniRule"/>
</dbReference>
<dbReference type="GO" id="GO:0003924">
    <property type="term" value="F:GTPase activity"/>
    <property type="evidence" value="ECO:0007669"/>
    <property type="project" value="InterPro"/>
</dbReference>
<dbReference type="GO" id="GO:0016150">
    <property type="term" value="F:translation release factor activity, codon nonspecific"/>
    <property type="evidence" value="ECO:0007669"/>
    <property type="project" value="TreeGrafter"/>
</dbReference>
<dbReference type="GO" id="GO:0016149">
    <property type="term" value="F:translation release factor activity, codon specific"/>
    <property type="evidence" value="ECO:0007669"/>
    <property type="project" value="UniProtKB-UniRule"/>
</dbReference>
<dbReference type="GO" id="GO:0006449">
    <property type="term" value="P:regulation of translational termination"/>
    <property type="evidence" value="ECO:0007669"/>
    <property type="project" value="UniProtKB-UniRule"/>
</dbReference>
<dbReference type="CDD" id="cd04169">
    <property type="entry name" value="RF3"/>
    <property type="match status" value="1"/>
</dbReference>
<dbReference type="CDD" id="cd03689">
    <property type="entry name" value="RF3_II"/>
    <property type="match status" value="1"/>
</dbReference>
<dbReference type="CDD" id="cd16259">
    <property type="entry name" value="RF3_III"/>
    <property type="match status" value="1"/>
</dbReference>
<dbReference type="FunFam" id="2.40.30.10:FF:000040">
    <property type="entry name" value="Peptide chain release factor 3"/>
    <property type="match status" value="1"/>
</dbReference>
<dbReference type="FunFam" id="3.30.70.3280:FF:000001">
    <property type="entry name" value="Peptide chain release factor 3"/>
    <property type="match status" value="1"/>
</dbReference>
<dbReference type="FunFam" id="3.40.50.300:FF:000542">
    <property type="entry name" value="Peptide chain release factor 3"/>
    <property type="match status" value="1"/>
</dbReference>
<dbReference type="Gene3D" id="3.40.50.300">
    <property type="entry name" value="P-loop containing nucleotide triphosphate hydrolases"/>
    <property type="match status" value="2"/>
</dbReference>
<dbReference type="Gene3D" id="3.30.70.3280">
    <property type="entry name" value="Peptide chain release factor 3, domain III"/>
    <property type="match status" value="1"/>
</dbReference>
<dbReference type="HAMAP" id="MF_00072">
    <property type="entry name" value="Rel_fac_3"/>
    <property type="match status" value="1"/>
</dbReference>
<dbReference type="InterPro" id="IPR053905">
    <property type="entry name" value="EF-G-like_DII"/>
</dbReference>
<dbReference type="InterPro" id="IPR035647">
    <property type="entry name" value="EFG_III/V"/>
</dbReference>
<dbReference type="InterPro" id="IPR031157">
    <property type="entry name" value="G_TR_CS"/>
</dbReference>
<dbReference type="InterPro" id="IPR027417">
    <property type="entry name" value="P-loop_NTPase"/>
</dbReference>
<dbReference type="InterPro" id="IPR004548">
    <property type="entry name" value="PrfC"/>
</dbReference>
<dbReference type="InterPro" id="IPR032090">
    <property type="entry name" value="RF3_C"/>
</dbReference>
<dbReference type="InterPro" id="IPR038467">
    <property type="entry name" value="RF3_dom_3_sf"/>
</dbReference>
<dbReference type="InterPro" id="IPR041732">
    <property type="entry name" value="RF3_GTP-bd"/>
</dbReference>
<dbReference type="InterPro" id="IPR005225">
    <property type="entry name" value="Small_GTP-bd"/>
</dbReference>
<dbReference type="InterPro" id="IPR000795">
    <property type="entry name" value="T_Tr_GTP-bd_dom"/>
</dbReference>
<dbReference type="InterPro" id="IPR009000">
    <property type="entry name" value="Transl_B-barrel_sf"/>
</dbReference>
<dbReference type="NCBIfam" id="TIGR00503">
    <property type="entry name" value="prfC"/>
    <property type="match status" value="1"/>
</dbReference>
<dbReference type="NCBIfam" id="NF001964">
    <property type="entry name" value="PRK00741.1"/>
    <property type="match status" value="1"/>
</dbReference>
<dbReference type="NCBIfam" id="TIGR00231">
    <property type="entry name" value="small_GTP"/>
    <property type="match status" value="1"/>
</dbReference>
<dbReference type="PANTHER" id="PTHR43556">
    <property type="entry name" value="PEPTIDE CHAIN RELEASE FACTOR RF3"/>
    <property type="match status" value="1"/>
</dbReference>
<dbReference type="PANTHER" id="PTHR43556:SF2">
    <property type="entry name" value="PEPTIDE CHAIN RELEASE FACTOR RF3"/>
    <property type="match status" value="1"/>
</dbReference>
<dbReference type="Pfam" id="PF22042">
    <property type="entry name" value="EF-G_D2"/>
    <property type="match status" value="1"/>
</dbReference>
<dbReference type="Pfam" id="PF00009">
    <property type="entry name" value="GTP_EFTU"/>
    <property type="match status" value="1"/>
</dbReference>
<dbReference type="Pfam" id="PF16658">
    <property type="entry name" value="RF3_C"/>
    <property type="match status" value="1"/>
</dbReference>
<dbReference type="PRINTS" id="PR00315">
    <property type="entry name" value="ELONGATNFCT"/>
</dbReference>
<dbReference type="SUPFAM" id="SSF54980">
    <property type="entry name" value="EF-G C-terminal domain-like"/>
    <property type="match status" value="1"/>
</dbReference>
<dbReference type="SUPFAM" id="SSF52540">
    <property type="entry name" value="P-loop containing nucleoside triphosphate hydrolases"/>
    <property type="match status" value="1"/>
</dbReference>
<dbReference type="SUPFAM" id="SSF50447">
    <property type="entry name" value="Translation proteins"/>
    <property type="match status" value="1"/>
</dbReference>
<dbReference type="PROSITE" id="PS00301">
    <property type="entry name" value="G_TR_1"/>
    <property type="match status" value="1"/>
</dbReference>
<dbReference type="PROSITE" id="PS51722">
    <property type="entry name" value="G_TR_2"/>
    <property type="match status" value="1"/>
</dbReference>
<name>RF3_CUPPJ</name>
<reference key="1">
    <citation type="journal article" date="2010" name="PLoS ONE">
        <title>The complete multipartite genome sequence of Cupriavidus necator JMP134, a versatile pollutant degrader.</title>
        <authorList>
            <person name="Lykidis A."/>
            <person name="Perez-Pantoja D."/>
            <person name="Ledger T."/>
            <person name="Mavromatis K."/>
            <person name="Anderson I.J."/>
            <person name="Ivanova N.N."/>
            <person name="Hooper S.D."/>
            <person name="Lapidus A."/>
            <person name="Lucas S."/>
            <person name="Gonzalez B."/>
            <person name="Kyrpides N.C."/>
        </authorList>
    </citation>
    <scope>NUCLEOTIDE SEQUENCE [LARGE SCALE GENOMIC DNA]</scope>
    <source>
        <strain>JMP134 / LMG 1197</strain>
    </source>
</reference>
<gene>
    <name evidence="1" type="primary">prfC</name>
    <name type="ordered locus">Reut_B5334</name>
</gene>